<accession>A8MJX1</accession>
<evidence type="ECO:0000255" key="1">
    <source>
        <dbReference type="HAMAP-Rule" id="MF_01218"/>
    </source>
</evidence>
<reference key="1">
    <citation type="submission" date="2007-10" db="EMBL/GenBank/DDBJ databases">
        <title>Complete genome of Alkaliphilus oremlandii OhILAs.</title>
        <authorList>
            <person name="Copeland A."/>
            <person name="Lucas S."/>
            <person name="Lapidus A."/>
            <person name="Barry K."/>
            <person name="Detter J.C."/>
            <person name="Glavina del Rio T."/>
            <person name="Hammon N."/>
            <person name="Israni S."/>
            <person name="Dalin E."/>
            <person name="Tice H."/>
            <person name="Pitluck S."/>
            <person name="Chain P."/>
            <person name="Malfatti S."/>
            <person name="Shin M."/>
            <person name="Vergez L."/>
            <person name="Schmutz J."/>
            <person name="Larimer F."/>
            <person name="Land M."/>
            <person name="Hauser L."/>
            <person name="Kyrpides N."/>
            <person name="Mikhailova N."/>
            <person name="Stolz J.F."/>
            <person name="Dawson A."/>
            <person name="Fisher E."/>
            <person name="Crable B."/>
            <person name="Perera E."/>
            <person name="Lisak J."/>
            <person name="Ranganathan M."/>
            <person name="Basu P."/>
            <person name="Richardson P."/>
        </authorList>
    </citation>
    <scope>NUCLEOTIDE SEQUENCE [LARGE SCALE GENOMIC DNA]</scope>
    <source>
        <strain>OhILAs</strain>
    </source>
</reference>
<feature type="chain" id="PRO_1000066726" description="Uracil phosphoribosyltransferase">
    <location>
        <begin position="1"/>
        <end position="209"/>
    </location>
</feature>
<feature type="binding site" evidence="1">
    <location>
        <position position="79"/>
    </location>
    <ligand>
        <name>5-phospho-alpha-D-ribose 1-diphosphate</name>
        <dbReference type="ChEBI" id="CHEBI:58017"/>
    </ligand>
</feature>
<feature type="binding site" evidence="1">
    <location>
        <position position="104"/>
    </location>
    <ligand>
        <name>5-phospho-alpha-D-ribose 1-diphosphate</name>
        <dbReference type="ChEBI" id="CHEBI:58017"/>
    </ligand>
</feature>
<feature type="binding site" evidence="1">
    <location>
        <begin position="131"/>
        <end position="139"/>
    </location>
    <ligand>
        <name>5-phospho-alpha-D-ribose 1-diphosphate</name>
        <dbReference type="ChEBI" id="CHEBI:58017"/>
    </ligand>
</feature>
<feature type="binding site" evidence="1">
    <location>
        <position position="194"/>
    </location>
    <ligand>
        <name>uracil</name>
        <dbReference type="ChEBI" id="CHEBI:17568"/>
    </ligand>
</feature>
<feature type="binding site" evidence="1">
    <location>
        <begin position="199"/>
        <end position="201"/>
    </location>
    <ligand>
        <name>uracil</name>
        <dbReference type="ChEBI" id="CHEBI:17568"/>
    </ligand>
</feature>
<feature type="binding site" evidence="1">
    <location>
        <position position="200"/>
    </location>
    <ligand>
        <name>5-phospho-alpha-D-ribose 1-diphosphate</name>
        <dbReference type="ChEBI" id="CHEBI:58017"/>
    </ligand>
</feature>
<organism>
    <name type="scientific">Alkaliphilus oremlandii (strain OhILAs)</name>
    <name type="common">Clostridium oremlandii (strain OhILAs)</name>
    <dbReference type="NCBI Taxonomy" id="350688"/>
    <lineage>
        <taxon>Bacteria</taxon>
        <taxon>Bacillati</taxon>
        <taxon>Bacillota</taxon>
        <taxon>Clostridia</taxon>
        <taxon>Peptostreptococcales</taxon>
        <taxon>Natronincolaceae</taxon>
        <taxon>Alkaliphilus</taxon>
    </lineage>
</organism>
<dbReference type="EC" id="2.4.2.9" evidence="1"/>
<dbReference type="EMBL" id="CP000853">
    <property type="protein sequence ID" value="ABW20103.1"/>
    <property type="molecule type" value="Genomic_DNA"/>
</dbReference>
<dbReference type="RefSeq" id="WP_012160410.1">
    <property type="nucleotide sequence ID" value="NC_009922.1"/>
</dbReference>
<dbReference type="SMR" id="A8MJX1"/>
<dbReference type="STRING" id="350688.Clos_2572"/>
<dbReference type="KEGG" id="aoe:Clos_2572"/>
<dbReference type="eggNOG" id="COG0035">
    <property type="taxonomic scope" value="Bacteria"/>
</dbReference>
<dbReference type="HOGENOM" id="CLU_067096_2_2_9"/>
<dbReference type="OrthoDB" id="9781675at2"/>
<dbReference type="UniPathway" id="UPA00574">
    <property type="reaction ID" value="UER00636"/>
</dbReference>
<dbReference type="Proteomes" id="UP000000269">
    <property type="component" value="Chromosome"/>
</dbReference>
<dbReference type="GO" id="GO:0005525">
    <property type="term" value="F:GTP binding"/>
    <property type="evidence" value="ECO:0007669"/>
    <property type="project" value="UniProtKB-KW"/>
</dbReference>
<dbReference type="GO" id="GO:0000287">
    <property type="term" value="F:magnesium ion binding"/>
    <property type="evidence" value="ECO:0007669"/>
    <property type="project" value="UniProtKB-UniRule"/>
</dbReference>
<dbReference type="GO" id="GO:0004845">
    <property type="term" value="F:uracil phosphoribosyltransferase activity"/>
    <property type="evidence" value="ECO:0007669"/>
    <property type="project" value="UniProtKB-UniRule"/>
</dbReference>
<dbReference type="GO" id="GO:0044206">
    <property type="term" value="P:UMP salvage"/>
    <property type="evidence" value="ECO:0007669"/>
    <property type="project" value="UniProtKB-UniRule"/>
</dbReference>
<dbReference type="GO" id="GO:0006223">
    <property type="term" value="P:uracil salvage"/>
    <property type="evidence" value="ECO:0007669"/>
    <property type="project" value="InterPro"/>
</dbReference>
<dbReference type="CDD" id="cd06223">
    <property type="entry name" value="PRTases_typeI"/>
    <property type="match status" value="1"/>
</dbReference>
<dbReference type="FunFam" id="3.40.50.2020:FF:000003">
    <property type="entry name" value="Uracil phosphoribosyltransferase"/>
    <property type="match status" value="1"/>
</dbReference>
<dbReference type="Gene3D" id="3.40.50.2020">
    <property type="match status" value="1"/>
</dbReference>
<dbReference type="HAMAP" id="MF_01218_B">
    <property type="entry name" value="Upp_B"/>
    <property type="match status" value="1"/>
</dbReference>
<dbReference type="InterPro" id="IPR000836">
    <property type="entry name" value="PRibTrfase_dom"/>
</dbReference>
<dbReference type="InterPro" id="IPR029057">
    <property type="entry name" value="PRTase-like"/>
</dbReference>
<dbReference type="InterPro" id="IPR034332">
    <property type="entry name" value="Upp_B"/>
</dbReference>
<dbReference type="InterPro" id="IPR050054">
    <property type="entry name" value="UPRTase/APRTase"/>
</dbReference>
<dbReference type="InterPro" id="IPR005765">
    <property type="entry name" value="Ura_phspho_trans"/>
</dbReference>
<dbReference type="NCBIfam" id="NF001097">
    <property type="entry name" value="PRK00129.1"/>
    <property type="match status" value="1"/>
</dbReference>
<dbReference type="NCBIfam" id="TIGR01091">
    <property type="entry name" value="upp"/>
    <property type="match status" value="1"/>
</dbReference>
<dbReference type="PANTHER" id="PTHR32315">
    <property type="entry name" value="ADENINE PHOSPHORIBOSYLTRANSFERASE"/>
    <property type="match status" value="1"/>
</dbReference>
<dbReference type="PANTHER" id="PTHR32315:SF4">
    <property type="entry name" value="URACIL PHOSPHORIBOSYLTRANSFERASE, CHLOROPLASTIC"/>
    <property type="match status" value="1"/>
</dbReference>
<dbReference type="Pfam" id="PF14681">
    <property type="entry name" value="UPRTase"/>
    <property type="match status" value="1"/>
</dbReference>
<dbReference type="SUPFAM" id="SSF53271">
    <property type="entry name" value="PRTase-like"/>
    <property type="match status" value="1"/>
</dbReference>
<sequence length="209" mass="22752">MSKVTVIDHPLIQHKLTLIRDKNTGSKDFRALVREISMLMGYEVTRDLSLEEIEIETPVCTTKAKTLTGRKLGIVPILRAGLGMVDGILELIPAAKVGHVGLYRDPETLEPVEYYVKLPTDVHERELIVLDPMLATGGSANAAIQFIKDRGATNIKLVCLVSCPQGIAAVQEAHPDVDIYVAAIDETLDDHAYIVPGLGDAGDRLFGTK</sequence>
<name>UPP_ALKOO</name>
<proteinExistence type="inferred from homology"/>
<protein>
    <recommendedName>
        <fullName evidence="1">Uracil phosphoribosyltransferase</fullName>
        <ecNumber evidence="1">2.4.2.9</ecNumber>
    </recommendedName>
    <alternativeName>
        <fullName evidence="1">UMP pyrophosphorylase</fullName>
    </alternativeName>
    <alternativeName>
        <fullName evidence="1">UPRTase</fullName>
    </alternativeName>
</protein>
<keyword id="KW-0021">Allosteric enzyme</keyword>
<keyword id="KW-0328">Glycosyltransferase</keyword>
<keyword id="KW-0342">GTP-binding</keyword>
<keyword id="KW-0460">Magnesium</keyword>
<keyword id="KW-0547">Nucleotide-binding</keyword>
<keyword id="KW-1185">Reference proteome</keyword>
<keyword id="KW-0808">Transferase</keyword>
<gene>
    <name evidence="1" type="primary">upp</name>
    <name type="ordered locus">Clos_2572</name>
</gene>
<comment type="function">
    <text evidence="1">Catalyzes the conversion of uracil and 5-phospho-alpha-D-ribose 1-diphosphate (PRPP) to UMP and diphosphate.</text>
</comment>
<comment type="catalytic activity">
    <reaction evidence="1">
        <text>UMP + diphosphate = 5-phospho-alpha-D-ribose 1-diphosphate + uracil</text>
        <dbReference type="Rhea" id="RHEA:13017"/>
        <dbReference type="ChEBI" id="CHEBI:17568"/>
        <dbReference type="ChEBI" id="CHEBI:33019"/>
        <dbReference type="ChEBI" id="CHEBI:57865"/>
        <dbReference type="ChEBI" id="CHEBI:58017"/>
        <dbReference type="EC" id="2.4.2.9"/>
    </reaction>
</comment>
<comment type="cofactor">
    <cofactor evidence="1">
        <name>Mg(2+)</name>
        <dbReference type="ChEBI" id="CHEBI:18420"/>
    </cofactor>
    <text evidence="1">Binds 1 Mg(2+) ion per subunit. The magnesium is bound as Mg-PRPP.</text>
</comment>
<comment type="activity regulation">
    <text evidence="1">Allosterically activated by GTP.</text>
</comment>
<comment type="pathway">
    <text evidence="1">Pyrimidine metabolism; UMP biosynthesis via salvage pathway; UMP from uracil: step 1/1.</text>
</comment>
<comment type="similarity">
    <text evidence="1">Belongs to the UPRTase family.</text>
</comment>